<accession>Q7VIH2</accession>
<name>RECA_HELHP</name>
<feature type="chain" id="PRO_0000122724" description="Protein RecA">
    <location>
        <begin position="1"/>
        <end position="345"/>
    </location>
</feature>
<feature type="binding site" evidence="1">
    <location>
        <begin position="66"/>
        <end position="73"/>
    </location>
    <ligand>
        <name>ATP</name>
        <dbReference type="ChEBI" id="CHEBI:30616"/>
    </ligand>
</feature>
<comment type="function">
    <text evidence="1">Can catalyze the hydrolysis of ATP in the presence of single-stranded DNA, the ATP-dependent uptake of single-stranded DNA by duplex DNA, and the ATP-dependent hybridization of homologous single-stranded DNAs. It interacts with LexA causing its activation and leading to its autocatalytic cleavage.</text>
</comment>
<comment type="subcellular location">
    <subcellularLocation>
        <location evidence="1">Cytoplasm</location>
    </subcellularLocation>
</comment>
<comment type="similarity">
    <text evidence="1">Belongs to the RecA family.</text>
</comment>
<keyword id="KW-0067">ATP-binding</keyword>
<keyword id="KW-0963">Cytoplasm</keyword>
<keyword id="KW-0227">DNA damage</keyword>
<keyword id="KW-0233">DNA recombination</keyword>
<keyword id="KW-0234">DNA repair</keyword>
<keyword id="KW-0238">DNA-binding</keyword>
<keyword id="KW-0547">Nucleotide-binding</keyword>
<keyword id="KW-1185">Reference proteome</keyword>
<keyword id="KW-0742">SOS response</keyword>
<reference key="1">
    <citation type="journal article" date="2003" name="Proc. Natl. Acad. Sci. U.S.A.">
        <title>The complete genome sequence of the carcinogenic bacterium Helicobacter hepaticus.</title>
        <authorList>
            <person name="Suerbaum S."/>
            <person name="Josenhans C."/>
            <person name="Sterzenbach T."/>
            <person name="Drescher B."/>
            <person name="Brandt P."/>
            <person name="Bell M."/>
            <person name="Droege M."/>
            <person name="Fartmann B."/>
            <person name="Fischer H.-P."/>
            <person name="Ge Z."/>
            <person name="Hoerster A."/>
            <person name="Holland R."/>
            <person name="Klein K."/>
            <person name="Koenig J."/>
            <person name="Macko L."/>
            <person name="Mendz G.L."/>
            <person name="Nyakatura G."/>
            <person name="Schauer D.B."/>
            <person name="Shen Z."/>
            <person name="Weber J."/>
            <person name="Frosch M."/>
            <person name="Fox J.G."/>
        </authorList>
    </citation>
    <scope>NUCLEOTIDE SEQUENCE [LARGE SCALE GENOMIC DNA]</scope>
    <source>
        <strain>ATCC 51449 / 3B1</strain>
    </source>
</reference>
<evidence type="ECO:0000255" key="1">
    <source>
        <dbReference type="HAMAP-Rule" id="MF_00268"/>
    </source>
</evidence>
<protein>
    <recommendedName>
        <fullName evidence="1">Protein RecA</fullName>
    </recommendedName>
    <alternativeName>
        <fullName evidence="1">Recombinase A</fullName>
    </alternativeName>
</protein>
<organism>
    <name type="scientific">Helicobacter hepaticus (strain ATCC 51449 / 3B1)</name>
    <dbReference type="NCBI Taxonomy" id="235279"/>
    <lineage>
        <taxon>Bacteria</taxon>
        <taxon>Pseudomonadati</taxon>
        <taxon>Campylobacterota</taxon>
        <taxon>Epsilonproteobacteria</taxon>
        <taxon>Campylobacterales</taxon>
        <taxon>Helicobacteraceae</taxon>
        <taxon>Helicobacter</taxon>
    </lineage>
</organism>
<gene>
    <name evidence="1" type="primary">recA</name>
    <name type="ordered locus">HH_0633</name>
</gene>
<dbReference type="EMBL" id="AE017125">
    <property type="protein sequence ID" value="AAP77230.1"/>
    <property type="molecule type" value="Genomic_DNA"/>
</dbReference>
<dbReference type="RefSeq" id="WP_011115475.1">
    <property type="nucleotide sequence ID" value="NC_004917.1"/>
</dbReference>
<dbReference type="SMR" id="Q7VIH2"/>
<dbReference type="STRING" id="235279.HH_0633"/>
<dbReference type="KEGG" id="hhe:HH_0633"/>
<dbReference type="eggNOG" id="COG0468">
    <property type="taxonomic scope" value="Bacteria"/>
</dbReference>
<dbReference type="HOGENOM" id="CLU_040469_3_2_7"/>
<dbReference type="OrthoDB" id="9776733at2"/>
<dbReference type="Proteomes" id="UP000002495">
    <property type="component" value="Chromosome"/>
</dbReference>
<dbReference type="GO" id="GO:0005829">
    <property type="term" value="C:cytosol"/>
    <property type="evidence" value="ECO:0007669"/>
    <property type="project" value="TreeGrafter"/>
</dbReference>
<dbReference type="GO" id="GO:0005524">
    <property type="term" value="F:ATP binding"/>
    <property type="evidence" value="ECO:0007669"/>
    <property type="project" value="UniProtKB-UniRule"/>
</dbReference>
<dbReference type="GO" id="GO:0016887">
    <property type="term" value="F:ATP hydrolysis activity"/>
    <property type="evidence" value="ECO:0007669"/>
    <property type="project" value="InterPro"/>
</dbReference>
<dbReference type="GO" id="GO:0140664">
    <property type="term" value="F:ATP-dependent DNA damage sensor activity"/>
    <property type="evidence" value="ECO:0007669"/>
    <property type="project" value="InterPro"/>
</dbReference>
<dbReference type="GO" id="GO:0003684">
    <property type="term" value="F:damaged DNA binding"/>
    <property type="evidence" value="ECO:0007669"/>
    <property type="project" value="UniProtKB-UniRule"/>
</dbReference>
<dbReference type="GO" id="GO:0003697">
    <property type="term" value="F:single-stranded DNA binding"/>
    <property type="evidence" value="ECO:0007669"/>
    <property type="project" value="UniProtKB-UniRule"/>
</dbReference>
<dbReference type="GO" id="GO:0006310">
    <property type="term" value="P:DNA recombination"/>
    <property type="evidence" value="ECO:0007669"/>
    <property type="project" value="UniProtKB-UniRule"/>
</dbReference>
<dbReference type="GO" id="GO:0006281">
    <property type="term" value="P:DNA repair"/>
    <property type="evidence" value="ECO:0007669"/>
    <property type="project" value="UniProtKB-UniRule"/>
</dbReference>
<dbReference type="GO" id="GO:0009432">
    <property type="term" value="P:SOS response"/>
    <property type="evidence" value="ECO:0007669"/>
    <property type="project" value="UniProtKB-UniRule"/>
</dbReference>
<dbReference type="CDD" id="cd00983">
    <property type="entry name" value="RecA"/>
    <property type="match status" value="1"/>
</dbReference>
<dbReference type="FunFam" id="3.40.50.300:FF:000087">
    <property type="entry name" value="Recombinase RecA"/>
    <property type="match status" value="1"/>
</dbReference>
<dbReference type="Gene3D" id="3.40.50.300">
    <property type="entry name" value="P-loop containing nucleotide triphosphate hydrolases"/>
    <property type="match status" value="1"/>
</dbReference>
<dbReference type="HAMAP" id="MF_00268">
    <property type="entry name" value="RecA"/>
    <property type="match status" value="1"/>
</dbReference>
<dbReference type="InterPro" id="IPR003593">
    <property type="entry name" value="AAA+_ATPase"/>
</dbReference>
<dbReference type="InterPro" id="IPR013765">
    <property type="entry name" value="DNA_recomb/repair_RecA"/>
</dbReference>
<dbReference type="InterPro" id="IPR020584">
    <property type="entry name" value="DNA_recomb/repair_RecA_CS"/>
</dbReference>
<dbReference type="InterPro" id="IPR027417">
    <property type="entry name" value="P-loop_NTPase"/>
</dbReference>
<dbReference type="InterPro" id="IPR049261">
    <property type="entry name" value="RecA-like_C"/>
</dbReference>
<dbReference type="InterPro" id="IPR049428">
    <property type="entry name" value="RecA-like_N"/>
</dbReference>
<dbReference type="InterPro" id="IPR020588">
    <property type="entry name" value="RecA_ATP-bd"/>
</dbReference>
<dbReference type="InterPro" id="IPR023400">
    <property type="entry name" value="RecA_C_sf"/>
</dbReference>
<dbReference type="InterPro" id="IPR020587">
    <property type="entry name" value="RecA_monomer-monomer_interface"/>
</dbReference>
<dbReference type="NCBIfam" id="TIGR02012">
    <property type="entry name" value="tigrfam_recA"/>
    <property type="match status" value="1"/>
</dbReference>
<dbReference type="PANTHER" id="PTHR45900:SF1">
    <property type="entry name" value="MITOCHONDRIAL DNA REPAIR PROTEIN RECA HOMOLOG-RELATED"/>
    <property type="match status" value="1"/>
</dbReference>
<dbReference type="PANTHER" id="PTHR45900">
    <property type="entry name" value="RECA"/>
    <property type="match status" value="1"/>
</dbReference>
<dbReference type="Pfam" id="PF00154">
    <property type="entry name" value="RecA"/>
    <property type="match status" value="1"/>
</dbReference>
<dbReference type="Pfam" id="PF21096">
    <property type="entry name" value="RecA_C"/>
    <property type="match status" value="1"/>
</dbReference>
<dbReference type="PRINTS" id="PR00142">
    <property type="entry name" value="RECA"/>
</dbReference>
<dbReference type="SMART" id="SM00382">
    <property type="entry name" value="AAA"/>
    <property type="match status" value="1"/>
</dbReference>
<dbReference type="SUPFAM" id="SSF52540">
    <property type="entry name" value="P-loop containing nucleoside triphosphate hydrolases"/>
    <property type="match status" value="1"/>
</dbReference>
<dbReference type="SUPFAM" id="SSF54752">
    <property type="entry name" value="RecA protein, C-terminal domain"/>
    <property type="match status" value="1"/>
</dbReference>
<dbReference type="PROSITE" id="PS00321">
    <property type="entry name" value="RECA_1"/>
    <property type="match status" value="1"/>
</dbReference>
<dbReference type="PROSITE" id="PS50162">
    <property type="entry name" value="RECA_2"/>
    <property type="match status" value="1"/>
</dbReference>
<dbReference type="PROSITE" id="PS50163">
    <property type="entry name" value="RECA_3"/>
    <property type="match status" value="1"/>
</dbReference>
<sequence>MVDEKRQKAIELALKQIDKAFGKGALVRLGDKQVEKIDSISTGSLGLDMALGIGGVPKGRIIEIYGPESSGKTTLSLQIVAECQRNGGICAFIDAEHALDVYYAKRLGVDTENLLVSQPDTGEQALEILETLTRSGAVDLIVIDSVAALTPKAEIEGDMGDQHVGLQARLMSHALRKITGVLHKMNATLIFINQIRMKIGTMGYGSPETTTGGNALKFYASVRIDVRRVATLKQNDQQIGNRTKAKVVKNKVAPPFREAEFDIMFGEGISKEGEIIDYGIKLDIIDKSGAWLSYNDKKLGQGRENAKIVLKENKSLADEITAKIKEQIGSKDEILPLPDEPETDE</sequence>
<proteinExistence type="inferred from homology"/>